<reference key="1">
    <citation type="submission" date="2007-06" db="EMBL/GenBank/DDBJ databases">
        <title>Complete sequence of Methanococcus maripaludis C7.</title>
        <authorList>
            <consortium name="US DOE Joint Genome Institute"/>
            <person name="Copeland A."/>
            <person name="Lucas S."/>
            <person name="Lapidus A."/>
            <person name="Barry K."/>
            <person name="Glavina del Rio T."/>
            <person name="Dalin E."/>
            <person name="Tice H."/>
            <person name="Pitluck S."/>
            <person name="Clum A."/>
            <person name="Schmutz J."/>
            <person name="Larimer F."/>
            <person name="Land M."/>
            <person name="Hauser L."/>
            <person name="Kyrpides N."/>
            <person name="Anderson I."/>
            <person name="Sieprawska-Lupa M."/>
            <person name="Whitman W.B."/>
            <person name="Richardson P."/>
        </authorList>
    </citation>
    <scope>NUCLEOTIDE SEQUENCE [LARGE SCALE GENOMIC DNA]</scope>
    <source>
        <strain>C7 / ATCC BAA-1331</strain>
    </source>
</reference>
<name>THIE_METM7</name>
<dbReference type="EC" id="2.5.1.3" evidence="1"/>
<dbReference type="EMBL" id="CP000745">
    <property type="protein sequence ID" value="ABR65459.1"/>
    <property type="molecule type" value="Genomic_DNA"/>
</dbReference>
<dbReference type="SMR" id="A6VG83"/>
<dbReference type="STRING" id="426368.MmarC7_0390"/>
<dbReference type="KEGG" id="mmz:MmarC7_0390"/>
<dbReference type="eggNOG" id="arCOG01089">
    <property type="taxonomic scope" value="Archaea"/>
</dbReference>
<dbReference type="HOGENOM" id="CLU_018272_3_2_2"/>
<dbReference type="OrthoDB" id="85572at2157"/>
<dbReference type="UniPathway" id="UPA00060">
    <property type="reaction ID" value="UER00141"/>
</dbReference>
<dbReference type="GO" id="GO:0005737">
    <property type="term" value="C:cytoplasm"/>
    <property type="evidence" value="ECO:0007669"/>
    <property type="project" value="TreeGrafter"/>
</dbReference>
<dbReference type="GO" id="GO:0000287">
    <property type="term" value="F:magnesium ion binding"/>
    <property type="evidence" value="ECO:0007669"/>
    <property type="project" value="UniProtKB-UniRule"/>
</dbReference>
<dbReference type="GO" id="GO:0004789">
    <property type="term" value="F:thiamine-phosphate diphosphorylase activity"/>
    <property type="evidence" value="ECO:0007669"/>
    <property type="project" value="UniProtKB-UniRule"/>
</dbReference>
<dbReference type="GO" id="GO:0009228">
    <property type="term" value="P:thiamine biosynthetic process"/>
    <property type="evidence" value="ECO:0007669"/>
    <property type="project" value="UniProtKB-KW"/>
</dbReference>
<dbReference type="GO" id="GO:0009229">
    <property type="term" value="P:thiamine diphosphate biosynthetic process"/>
    <property type="evidence" value="ECO:0007669"/>
    <property type="project" value="UniProtKB-UniRule"/>
</dbReference>
<dbReference type="CDD" id="cd00564">
    <property type="entry name" value="TMP_TenI"/>
    <property type="match status" value="1"/>
</dbReference>
<dbReference type="FunFam" id="3.20.20.70:FF:000096">
    <property type="entry name" value="Thiamine-phosphate synthase"/>
    <property type="match status" value="1"/>
</dbReference>
<dbReference type="Gene3D" id="3.20.20.70">
    <property type="entry name" value="Aldolase class I"/>
    <property type="match status" value="1"/>
</dbReference>
<dbReference type="HAMAP" id="MF_00097">
    <property type="entry name" value="TMP_synthase"/>
    <property type="match status" value="1"/>
</dbReference>
<dbReference type="InterPro" id="IPR013785">
    <property type="entry name" value="Aldolase_TIM"/>
</dbReference>
<dbReference type="InterPro" id="IPR036206">
    <property type="entry name" value="ThiamineP_synth_sf"/>
</dbReference>
<dbReference type="InterPro" id="IPR022998">
    <property type="entry name" value="ThiamineP_synth_TenI"/>
</dbReference>
<dbReference type="InterPro" id="IPR034291">
    <property type="entry name" value="TMP_synthase"/>
</dbReference>
<dbReference type="NCBIfam" id="TIGR00693">
    <property type="entry name" value="thiE"/>
    <property type="match status" value="1"/>
</dbReference>
<dbReference type="PANTHER" id="PTHR20857">
    <property type="entry name" value="THIAMINE-PHOSPHATE PYROPHOSPHORYLASE"/>
    <property type="match status" value="1"/>
</dbReference>
<dbReference type="PANTHER" id="PTHR20857:SF15">
    <property type="entry name" value="THIAMINE-PHOSPHATE SYNTHASE"/>
    <property type="match status" value="1"/>
</dbReference>
<dbReference type="Pfam" id="PF02581">
    <property type="entry name" value="TMP-TENI"/>
    <property type="match status" value="1"/>
</dbReference>
<dbReference type="SUPFAM" id="SSF51391">
    <property type="entry name" value="Thiamin phosphate synthase"/>
    <property type="match status" value="1"/>
</dbReference>
<sequence>MKFKDKLKFYVITDNNYSNEVVSVEEALKGGASSIQLRMKNSTTREMIEVGNELRKLTLEYDALFFVNDRLDVAQVVNADGIHVGIDDMPVSKIKEIAPNLIIGASAYNMEEMKTAESEGADYLGVGAVYSTNTKLDARNLGIDGLKSISKLSKLPIVAIGGINHSNVQNVLECGVSGVAVVSAIVGAENILKSAENMNELIKKYIK</sequence>
<feature type="chain" id="PRO_1000008151" description="Thiamine-phosphate synthase">
    <location>
        <begin position="1"/>
        <end position="207"/>
    </location>
</feature>
<feature type="binding site" evidence="1">
    <location>
        <begin position="36"/>
        <end position="40"/>
    </location>
    <ligand>
        <name>4-amino-2-methyl-5-(diphosphooxymethyl)pyrimidine</name>
        <dbReference type="ChEBI" id="CHEBI:57841"/>
    </ligand>
</feature>
<feature type="binding site" evidence="1">
    <location>
        <position position="68"/>
    </location>
    <ligand>
        <name>4-amino-2-methyl-5-(diphosphooxymethyl)pyrimidine</name>
        <dbReference type="ChEBI" id="CHEBI:57841"/>
    </ligand>
</feature>
<feature type="binding site" evidence="1">
    <location>
        <position position="69"/>
    </location>
    <ligand>
        <name>Mg(2+)</name>
        <dbReference type="ChEBI" id="CHEBI:18420"/>
    </ligand>
</feature>
<feature type="binding site" evidence="1">
    <location>
        <position position="88"/>
    </location>
    <ligand>
        <name>Mg(2+)</name>
        <dbReference type="ChEBI" id="CHEBI:18420"/>
    </ligand>
</feature>
<feature type="binding site" evidence="1">
    <location>
        <position position="106"/>
    </location>
    <ligand>
        <name>4-amino-2-methyl-5-(diphosphooxymethyl)pyrimidine</name>
        <dbReference type="ChEBI" id="CHEBI:57841"/>
    </ligand>
</feature>
<feature type="binding site" evidence="1">
    <location>
        <begin position="132"/>
        <end position="134"/>
    </location>
    <ligand>
        <name>2-[(2R,5Z)-2-carboxy-4-methylthiazol-5(2H)-ylidene]ethyl phosphate</name>
        <dbReference type="ChEBI" id="CHEBI:62899"/>
    </ligand>
</feature>
<feature type="binding site" evidence="1">
    <location>
        <position position="135"/>
    </location>
    <ligand>
        <name>4-amino-2-methyl-5-(diphosphooxymethyl)pyrimidine</name>
        <dbReference type="ChEBI" id="CHEBI:57841"/>
    </ligand>
</feature>
<feature type="binding site" evidence="1">
    <location>
        <position position="162"/>
    </location>
    <ligand>
        <name>2-[(2R,5Z)-2-carboxy-4-methylthiazol-5(2H)-ylidene]ethyl phosphate</name>
        <dbReference type="ChEBI" id="CHEBI:62899"/>
    </ligand>
</feature>
<feature type="binding site" evidence="1">
    <location>
        <begin position="182"/>
        <end position="183"/>
    </location>
    <ligand>
        <name>2-[(2R,5Z)-2-carboxy-4-methylthiazol-5(2H)-ylidene]ethyl phosphate</name>
        <dbReference type="ChEBI" id="CHEBI:62899"/>
    </ligand>
</feature>
<organism>
    <name type="scientific">Methanococcus maripaludis (strain C7 / ATCC BAA-1331)</name>
    <dbReference type="NCBI Taxonomy" id="426368"/>
    <lineage>
        <taxon>Archaea</taxon>
        <taxon>Methanobacteriati</taxon>
        <taxon>Methanobacteriota</taxon>
        <taxon>Methanomada group</taxon>
        <taxon>Methanococci</taxon>
        <taxon>Methanococcales</taxon>
        <taxon>Methanococcaceae</taxon>
        <taxon>Methanococcus</taxon>
    </lineage>
</organism>
<proteinExistence type="inferred from homology"/>
<protein>
    <recommendedName>
        <fullName evidence="1">Thiamine-phosphate synthase</fullName>
        <shortName evidence="1">TP synthase</shortName>
        <shortName evidence="1">TPS</shortName>
        <ecNumber evidence="1">2.5.1.3</ecNumber>
    </recommendedName>
    <alternativeName>
        <fullName evidence="1">Thiamine-phosphate pyrophosphorylase</fullName>
        <shortName evidence="1">TMP pyrophosphorylase</shortName>
        <shortName evidence="1">TMP-PPase</shortName>
    </alternativeName>
</protein>
<comment type="function">
    <text evidence="1">Condenses 4-methyl-5-(beta-hydroxyethyl)thiazole monophosphate (THZ-P) and 2-methyl-4-amino-5-hydroxymethyl pyrimidine pyrophosphate (HMP-PP) to form thiamine monophosphate (TMP).</text>
</comment>
<comment type="catalytic activity">
    <reaction evidence="1">
        <text>2-[(2R,5Z)-2-carboxy-4-methylthiazol-5(2H)-ylidene]ethyl phosphate + 4-amino-2-methyl-5-(diphosphooxymethyl)pyrimidine + 2 H(+) = thiamine phosphate + CO2 + diphosphate</text>
        <dbReference type="Rhea" id="RHEA:47844"/>
        <dbReference type="ChEBI" id="CHEBI:15378"/>
        <dbReference type="ChEBI" id="CHEBI:16526"/>
        <dbReference type="ChEBI" id="CHEBI:33019"/>
        <dbReference type="ChEBI" id="CHEBI:37575"/>
        <dbReference type="ChEBI" id="CHEBI:57841"/>
        <dbReference type="ChEBI" id="CHEBI:62899"/>
        <dbReference type="EC" id="2.5.1.3"/>
    </reaction>
</comment>
<comment type="catalytic activity">
    <reaction evidence="1">
        <text>2-(2-carboxy-4-methylthiazol-5-yl)ethyl phosphate + 4-amino-2-methyl-5-(diphosphooxymethyl)pyrimidine + 2 H(+) = thiamine phosphate + CO2 + diphosphate</text>
        <dbReference type="Rhea" id="RHEA:47848"/>
        <dbReference type="ChEBI" id="CHEBI:15378"/>
        <dbReference type="ChEBI" id="CHEBI:16526"/>
        <dbReference type="ChEBI" id="CHEBI:33019"/>
        <dbReference type="ChEBI" id="CHEBI:37575"/>
        <dbReference type="ChEBI" id="CHEBI:57841"/>
        <dbReference type="ChEBI" id="CHEBI:62890"/>
        <dbReference type="EC" id="2.5.1.3"/>
    </reaction>
</comment>
<comment type="catalytic activity">
    <reaction evidence="1">
        <text>4-methyl-5-(2-phosphooxyethyl)-thiazole + 4-amino-2-methyl-5-(diphosphooxymethyl)pyrimidine + H(+) = thiamine phosphate + diphosphate</text>
        <dbReference type="Rhea" id="RHEA:22328"/>
        <dbReference type="ChEBI" id="CHEBI:15378"/>
        <dbReference type="ChEBI" id="CHEBI:33019"/>
        <dbReference type="ChEBI" id="CHEBI:37575"/>
        <dbReference type="ChEBI" id="CHEBI:57841"/>
        <dbReference type="ChEBI" id="CHEBI:58296"/>
        <dbReference type="EC" id="2.5.1.3"/>
    </reaction>
</comment>
<comment type="cofactor">
    <cofactor evidence="1">
        <name>Mg(2+)</name>
        <dbReference type="ChEBI" id="CHEBI:18420"/>
    </cofactor>
    <text evidence="1">Binds 1 Mg(2+) ion per subunit.</text>
</comment>
<comment type="pathway">
    <text evidence="1">Cofactor biosynthesis; thiamine diphosphate biosynthesis; thiamine phosphate from 4-amino-2-methyl-5-diphosphomethylpyrimidine and 4-methyl-5-(2-phosphoethyl)-thiazole: step 1/1.</text>
</comment>
<comment type="similarity">
    <text evidence="1">Belongs to the thiamine-phosphate synthase family.</text>
</comment>
<accession>A6VG83</accession>
<evidence type="ECO:0000255" key="1">
    <source>
        <dbReference type="HAMAP-Rule" id="MF_00097"/>
    </source>
</evidence>
<gene>
    <name evidence="1" type="primary">thiE</name>
    <name type="ordered locus">MmarC7_0390</name>
</gene>
<keyword id="KW-0460">Magnesium</keyword>
<keyword id="KW-0479">Metal-binding</keyword>
<keyword id="KW-0784">Thiamine biosynthesis</keyword>
<keyword id="KW-0808">Transferase</keyword>